<comment type="function">
    <text evidence="1">Component of the MICOS complex, a large protein complex of the mitochondrial inner membrane that plays crucial roles in the maintenance of crista junctions, inner membrane architecture, and formation of contact sites to the outer membrane. Specifically binds to cardiolipin (in vitro) but not to the precursor lipid phosphatidylglycerol. Plays a crucial role in crista junction formation and mitochondrial function.</text>
</comment>
<comment type="subunit">
    <text evidence="1">Component of the mitochondrial contact site and cristae organizing system (MICOS) complex, composed of at least MICOS10/MIC10, CHCHD3/MIC19, CHCHD6/MIC25, APOOL/MIC27, IMMT/MIC60, APOO/MIC23/MIC26 and MICOS13/MIC13. This complex was also known under the names MINOS or MitOS complex. The MICOS complex associates with mitochondrial outer membrane proteins SAMM50, MTX1 and MTX2 (together described as components of the mitochondrial outer membrane sorting assembly machinery (SAM) complex) and DNAJC11, mitochondrial inner membrane protein TMEM11 and with HSPA9. The MICOS and SAM complexes together with DNAJC11 are part of a large protein complex spanning both membranes termed the mitochondrial intermembrane space bridging (MIB) complex. Interacts with MICOS10/MIC10, IMMT/MIC60 and APOO/MIC23/MIC26.</text>
</comment>
<comment type="subcellular location">
    <subcellularLocation>
        <location evidence="1">Mitochondrion inner membrane</location>
        <topology evidence="1">Multi-pass membrane protein</topology>
    </subcellularLocation>
    <subcellularLocation>
        <location evidence="1">Mitochondrion</location>
    </subcellularLocation>
</comment>
<comment type="similarity">
    <text evidence="4">Belongs to the apolipoprotein O/MICOS complex subunit Mic27 family.</text>
</comment>
<gene>
    <name type="primary">Apool</name>
    <name type="synonym">Fam121a</name>
    <name type="synonym">Mic27</name>
</gene>
<evidence type="ECO:0000250" key="1">
    <source>
        <dbReference type="UniProtKB" id="Q6UXV4"/>
    </source>
</evidence>
<evidence type="ECO:0000255" key="2"/>
<evidence type="ECO:0000256" key="3">
    <source>
        <dbReference type="SAM" id="MobiDB-lite"/>
    </source>
</evidence>
<evidence type="ECO:0000305" key="4"/>
<organism>
    <name type="scientific">Mus musculus</name>
    <name type="common">Mouse</name>
    <dbReference type="NCBI Taxonomy" id="10090"/>
    <lineage>
        <taxon>Eukaryota</taxon>
        <taxon>Metazoa</taxon>
        <taxon>Chordata</taxon>
        <taxon>Craniata</taxon>
        <taxon>Vertebrata</taxon>
        <taxon>Euteleostomi</taxon>
        <taxon>Mammalia</taxon>
        <taxon>Eutheria</taxon>
        <taxon>Euarchontoglires</taxon>
        <taxon>Glires</taxon>
        <taxon>Rodentia</taxon>
        <taxon>Myomorpha</taxon>
        <taxon>Muroidea</taxon>
        <taxon>Muridae</taxon>
        <taxon>Murinae</taxon>
        <taxon>Mus</taxon>
        <taxon>Mus</taxon>
    </lineage>
</organism>
<dbReference type="EMBL" id="BC024334">
    <property type="protein sequence ID" value="AAH24334.1"/>
    <property type="molecule type" value="mRNA"/>
</dbReference>
<dbReference type="CCDS" id="CCDS30359.1"/>
<dbReference type="RefSeq" id="NP_080841.1">
    <property type="nucleotide sequence ID" value="NM_026565.3"/>
</dbReference>
<dbReference type="BioGRID" id="212664">
    <property type="interactions" value="12"/>
</dbReference>
<dbReference type="FunCoup" id="Q78IK4">
    <property type="interactions" value="1676"/>
</dbReference>
<dbReference type="IntAct" id="Q78IK4">
    <property type="interactions" value="4"/>
</dbReference>
<dbReference type="STRING" id="10090.ENSMUSP00000026599"/>
<dbReference type="GlyGen" id="Q78IK4">
    <property type="glycosylation" value="2 sites, 1 N-linked glycan (1 site), 1 O-linked glycan (1 site)"/>
</dbReference>
<dbReference type="iPTMnet" id="Q78IK4"/>
<dbReference type="PhosphoSitePlus" id="Q78IK4"/>
<dbReference type="SwissPalm" id="Q78IK4"/>
<dbReference type="jPOST" id="Q78IK4"/>
<dbReference type="PaxDb" id="10090-ENSMUSP00000026599"/>
<dbReference type="PeptideAtlas" id="Q78IK4"/>
<dbReference type="ProteomicsDB" id="252554"/>
<dbReference type="Pumba" id="Q78IK4"/>
<dbReference type="Antibodypedia" id="390">
    <property type="antibodies" value="139 antibodies from 24 providers"/>
</dbReference>
<dbReference type="DNASU" id="68117"/>
<dbReference type="Ensembl" id="ENSMUST00000026599.10">
    <property type="protein sequence ID" value="ENSMUSP00000026599.4"/>
    <property type="gene ID" value="ENSMUSG00000025525.13"/>
</dbReference>
<dbReference type="GeneID" id="68117"/>
<dbReference type="KEGG" id="mmu:68117"/>
<dbReference type="UCSC" id="uc009udh.1">
    <property type="organism name" value="mouse"/>
</dbReference>
<dbReference type="AGR" id="MGI:1915367"/>
<dbReference type="CTD" id="139322"/>
<dbReference type="MGI" id="MGI:1915367">
    <property type="gene designation" value="Apool"/>
</dbReference>
<dbReference type="VEuPathDB" id="HostDB:ENSMUSG00000025525"/>
<dbReference type="eggNOG" id="KOG4798">
    <property type="taxonomic scope" value="Eukaryota"/>
</dbReference>
<dbReference type="GeneTree" id="ENSGT00530000063666"/>
<dbReference type="InParanoid" id="Q78IK4"/>
<dbReference type="OMA" id="QVTKWAA"/>
<dbReference type="OrthoDB" id="5973346at2759"/>
<dbReference type="PhylomeDB" id="Q78IK4"/>
<dbReference type="TreeFam" id="TF315313"/>
<dbReference type="Reactome" id="R-MMU-114608">
    <property type="pathway name" value="Platelet degranulation"/>
</dbReference>
<dbReference type="BioGRID-ORCS" id="68117">
    <property type="hits" value="2 hits in 78 CRISPR screens"/>
</dbReference>
<dbReference type="CD-CODE" id="CE726F99">
    <property type="entry name" value="Postsynaptic density"/>
</dbReference>
<dbReference type="PRO" id="PR:Q78IK4"/>
<dbReference type="Proteomes" id="UP000000589">
    <property type="component" value="Chromosome X"/>
</dbReference>
<dbReference type="RNAct" id="Q78IK4">
    <property type="molecule type" value="protein"/>
</dbReference>
<dbReference type="Bgee" id="ENSMUSG00000025525">
    <property type="expression patterns" value="Expressed in interventricular septum and 214 other cell types or tissues"/>
</dbReference>
<dbReference type="ExpressionAtlas" id="Q78IK4">
    <property type="expression patterns" value="baseline and differential"/>
</dbReference>
<dbReference type="GO" id="GO:0061617">
    <property type="term" value="C:MICOS complex"/>
    <property type="evidence" value="ECO:0007669"/>
    <property type="project" value="Ensembl"/>
</dbReference>
<dbReference type="GO" id="GO:0005743">
    <property type="term" value="C:mitochondrial inner membrane"/>
    <property type="evidence" value="ECO:0007005"/>
    <property type="project" value="MGI"/>
</dbReference>
<dbReference type="GO" id="GO:0005739">
    <property type="term" value="C:mitochondrion"/>
    <property type="evidence" value="ECO:0007005"/>
    <property type="project" value="MGI"/>
</dbReference>
<dbReference type="GO" id="GO:0042407">
    <property type="term" value="P:cristae formation"/>
    <property type="evidence" value="ECO:0007669"/>
    <property type="project" value="InterPro"/>
</dbReference>
<dbReference type="InterPro" id="IPR019166">
    <property type="entry name" value="MIC26/MIC27"/>
</dbReference>
<dbReference type="InterPro" id="IPR033182">
    <property type="entry name" value="MIC26/MIC27_animal"/>
</dbReference>
<dbReference type="PANTHER" id="PTHR14564">
    <property type="entry name" value="MICOS COMPLEX SUBUNIT MIC26 / MIC27 FAMILY MEMBER"/>
    <property type="match status" value="1"/>
</dbReference>
<dbReference type="Pfam" id="PF09769">
    <property type="entry name" value="ApoO"/>
    <property type="match status" value="1"/>
</dbReference>
<sequence length="265" mass="29261">MAAFRMGKLTTIPAGLIYASINVRLAKEEEPKKQLVRPDQLPIYTAPPLHSKYVEEQPGNLQRGFASIRTTTVYYIGWCKSIYLFMKNGVMDTVQFGKDAYVYLKNPPQDFLPKMGVITASGLAGLLSARKGSRFKKIAYPLGLATLGATVCYPAQSVIIAKITGKKAYATSQQIFQAIKSLWTQKSENESLPEPKEESKEGRSDEIHASLPDLKHSVSLPKELASATVIKSESTSGTTQFIPDPKLMDHGQSHPDDKDMYSTRS</sequence>
<proteinExistence type="evidence at protein level"/>
<name>MIC27_MOUSE</name>
<protein>
    <recommendedName>
        <fullName>MICOS complex subunit Mic27</fullName>
    </recommendedName>
    <alternativeName>
        <fullName>Apolipoprotein O-like</fullName>
    </alternativeName>
    <alternativeName>
        <fullName>Protein FAM121A</fullName>
    </alternativeName>
</protein>
<keyword id="KW-0472">Membrane</keyword>
<keyword id="KW-0496">Mitochondrion</keyword>
<keyword id="KW-0999">Mitochondrion inner membrane</keyword>
<keyword id="KW-0597">Phosphoprotein</keyword>
<keyword id="KW-1185">Reference proteome</keyword>
<keyword id="KW-0809">Transit peptide</keyword>
<keyword id="KW-0812">Transmembrane</keyword>
<keyword id="KW-1133">Transmembrane helix</keyword>
<feature type="transit peptide" description="Mitochondrion" evidence="2">
    <location>
        <begin position="1"/>
        <end position="27"/>
    </location>
</feature>
<feature type="chain" id="PRO_0000042054" description="MICOS complex subunit Mic27">
    <location>
        <begin position="28"/>
        <end position="265"/>
    </location>
</feature>
<feature type="topological domain" description="Mitochondrial intermembrane" evidence="2">
    <location>
        <begin position="28"/>
        <end position="110"/>
    </location>
</feature>
<feature type="transmembrane region" description="Helical" evidence="2">
    <location>
        <begin position="111"/>
        <end position="129"/>
    </location>
</feature>
<feature type="topological domain" description="Mitochondrial matrix" evidence="2">
    <location>
        <begin position="130"/>
        <end position="137"/>
    </location>
</feature>
<feature type="transmembrane region" description="Helical" evidence="2">
    <location>
        <begin position="138"/>
        <end position="155"/>
    </location>
</feature>
<feature type="topological domain" description="Mitochondrial intermembrane" evidence="2">
    <location>
        <begin position="156"/>
        <end position="265"/>
    </location>
</feature>
<feature type="region of interest" description="Disordered" evidence="3">
    <location>
        <begin position="187"/>
        <end position="215"/>
    </location>
</feature>
<feature type="region of interest" description="Disordered" evidence="3">
    <location>
        <begin position="229"/>
        <end position="265"/>
    </location>
</feature>
<feature type="compositionally biased region" description="Polar residues" evidence="3">
    <location>
        <begin position="229"/>
        <end position="241"/>
    </location>
</feature>
<feature type="compositionally biased region" description="Basic and acidic residues" evidence="3">
    <location>
        <begin position="246"/>
        <end position="265"/>
    </location>
</feature>
<feature type="modified residue" description="Phosphoserine" evidence="1">
    <location>
        <position position="204"/>
    </location>
</feature>
<accession>Q78IK4</accession>
<reference key="1">
    <citation type="journal article" date="2004" name="Genome Res.">
        <title>The status, quality, and expansion of the NIH full-length cDNA project: the Mammalian Gene Collection (MGC).</title>
        <authorList>
            <consortium name="The MGC Project Team"/>
        </authorList>
    </citation>
    <scope>NUCLEOTIDE SEQUENCE [LARGE SCALE MRNA]</scope>
    <source>
        <strain>Czech II</strain>
        <tissue>Mammary tumor</tissue>
    </source>
</reference>
<reference key="2">
    <citation type="journal article" date="2010" name="Cell">
        <title>A tissue-specific atlas of mouse protein phosphorylation and expression.</title>
        <authorList>
            <person name="Huttlin E.L."/>
            <person name="Jedrychowski M.P."/>
            <person name="Elias J.E."/>
            <person name="Goswami T."/>
            <person name="Rad R."/>
            <person name="Beausoleil S.A."/>
            <person name="Villen J."/>
            <person name="Haas W."/>
            <person name="Sowa M.E."/>
            <person name="Gygi S.P."/>
        </authorList>
    </citation>
    <scope>IDENTIFICATION BY MASS SPECTROMETRY [LARGE SCALE ANALYSIS]</scope>
    <source>
        <tissue>Brain</tissue>
        <tissue>Brown adipose tissue</tissue>
        <tissue>Heart</tissue>
        <tissue>Kidney</tissue>
        <tissue>Liver</tissue>
        <tissue>Lung</tissue>
        <tissue>Pancreas</tissue>
        <tissue>Spleen</tissue>
        <tissue>Testis</tissue>
    </source>
</reference>